<evidence type="ECO:0000255" key="1">
    <source>
        <dbReference type="PROSITE-ProRule" id="PRU00465"/>
    </source>
</evidence>
<evidence type="ECO:0000305" key="2"/>
<organism>
    <name type="scientific">Porphyridium purpureum</name>
    <name type="common">Red alga</name>
    <name type="synonym">Porphyridium cruentum</name>
    <dbReference type="NCBI Taxonomy" id="35688"/>
    <lineage>
        <taxon>Eukaryota</taxon>
        <taxon>Rhodophyta</taxon>
        <taxon>Bangiophyceae</taxon>
        <taxon>Porphyridiales</taxon>
        <taxon>Porphyridiaceae</taxon>
        <taxon>Porphyridium</taxon>
    </lineage>
</organism>
<dbReference type="PIR" id="JT0017">
    <property type="entry name" value="JT0017"/>
</dbReference>
<dbReference type="SMR" id="P18821"/>
<dbReference type="GO" id="GO:0009507">
    <property type="term" value="C:chloroplast"/>
    <property type="evidence" value="ECO:0007669"/>
    <property type="project" value="UniProtKB-SubCell"/>
</dbReference>
<dbReference type="GO" id="GO:0051537">
    <property type="term" value="F:2 iron, 2 sulfur cluster binding"/>
    <property type="evidence" value="ECO:0007669"/>
    <property type="project" value="UniProtKB-KW"/>
</dbReference>
<dbReference type="GO" id="GO:0046872">
    <property type="term" value="F:metal ion binding"/>
    <property type="evidence" value="ECO:0007669"/>
    <property type="project" value="UniProtKB-KW"/>
</dbReference>
<protein>
    <recommendedName>
        <fullName>Ferredoxin</fullName>
    </recommendedName>
</protein>
<name>FER_PORPP</name>
<accession>P18821</accession>
<comment type="function">
    <text>Ferredoxins are iron-sulfur proteins that transfer electrons in a wide variety of metabolic reactions.</text>
</comment>
<comment type="cofactor">
    <cofactor>
        <name>[2Fe-2S] cluster</name>
        <dbReference type="ChEBI" id="CHEBI:190135"/>
    </cofactor>
    <text>Binds 1 [2Fe-2S] cluster.</text>
</comment>
<comment type="subcellular location">
    <subcellularLocation>
        <location>Plastid</location>
        <location>Chloroplast</location>
    </subcellularLocation>
</comment>
<comment type="similarity">
    <text evidence="2">Belongs to the 2Fe2S plant-type ferredoxin family.</text>
</comment>
<reference key="1">
    <citation type="journal article" date="1981" name="Phytochemistry">
        <title>Comparative properties of ferredoxins from a marine and freshwater species of Porphyridium.</title>
        <authorList>
            <person name="Andrew P.W."/>
            <person name="Rogers L.J."/>
            <person name="Haslett B.G."/>
            <person name="Boulter D."/>
        </authorList>
    </citation>
    <scope>PROTEIN SEQUENCE</scope>
</reference>
<feature type="chain" id="PRO_0000189355" description="Ferredoxin">
    <location>
        <begin position="1"/>
        <end position="32" status="greater than"/>
    </location>
</feature>
<feature type="domain" description="2Fe-2S ferredoxin-type" evidence="1">
    <location>
        <begin position="3"/>
        <end position="32" status="greater than"/>
    </location>
</feature>
<feature type="non-terminal residue">
    <location>
        <position position="32"/>
    </location>
</feature>
<sequence>ATYKVRLLSEAEGIDVTIDCADDVYILDAAEE</sequence>
<proteinExistence type="evidence at protein level"/>
<keyword id="KW-0001">2Fe-2S</keyword>
<keyword id="KW-0150">Chloroplast</keyword>
<keyword id="KW-0903">Direct protein sequencing</keyword>
<keyword id="KW-0249">Electron transport</keyword>
<keyword id="KW-0408">Iron</keyword>
<keyword id="KW-0411">Iron-sulfur</keyword>
<keyword id="KW-0479">Metal-binding</keyword>
<keyword id="KW-0934">Plastid</keyword>
<keyword id="KW-0813">Transport</keyword>